<organism>
    <name type="scientific">Kluyveromyces lactis (strain ATCC 8585 / CBS 2359 / DSM 70799 / NBRC 1267 / NRRL Y-1140 / WM37)</name>
    <name type="common">Yeast</name>
    <name type="synonym">Candida sphaerica</name>
    <dbReference type="NCBI Taxonomy" id="284590"/>
    <lineage>
        <taxon>Eukaryota</taxon>
        <taxon>Fungi</taxon>
        <taxon>Dikarya</taxon>
        <taxon>Ascomycota</taxon>
        <taxon>Saccharomycotina</taxon>
        <taxon>Saccharomycetes</taxon>
        <taxon>Saccharomycetales</taxon>
        <taxon>Saccharomycetaceae</taxon>
        <taxon>Kluyveromyces</taxon>
    </lineage>
</organism>
<sequence>MSKGWRKLFVSRGDGTKNSLKKTLKVPEVRSPLLTNFHRWAGKERVLKLTDKEQVTEAVGNSSWDLSKNLFANLLASPMRSDKASRFKFPRDLLIQMKLVQTGNENPGKLATLMPLINMKSGKSSSYVANSLKIFKGKKPGLGQLVPTAVNDSGIANISLSDIVLDKSLFTEKHQEELLQCIENCMTQLVDRRKSSVPVVVEDWDVVLTYDHNNDNDIELVRLKQLPKDPTVIILNLKVVENDSIRALINDKLKNHEVGVVLKFLKDERLIRLVYSLLNFSK</sequence>
<protein>
    <recommendedName>
        <fullName>Required for respiratory growth protein 8, mitochondrial</fullName>
    </recommendedName>
</protein>
<keyword id="KW-0496">Mitochondrion</keyword>
<keyword id="KW-1185">Reference proteome</keyword>
<evidence type="ECO:0000250" key="1"/>
<evidence type="ECO:0000305" key="2"/>
<gene>
    <name type="primary">RRG8</name>
    <name type="ordered locus">KLLA0D15125g</name>
</gene>
<dbReference type="EMBL" id="CR382124">
    <property type="protein sequence ID" value="CAH00827.1"/>
    <property type="molecule type" value="Genomic_DNA"/>
</dbReference>
<dbReference type="RefSeq" id="XP_453731.1">
    <property type="nucleotide sequence ID" value="XM_453731.1"/>
</dbReference>
<dbReference type="FunCoup" id="Q6CQQ8">
    <property type="interactions" value="36"/>
</dbReference>
<dbReference type="STRING" id="284590.Q6CQQ8"/>
<dbReference type="PaxDb" id="284590-Q6CQQ8"/>
<dbReference type="KEGG" id="kla:KLLA0_D15125g"/>
<dbReference type="eggNOG" id="ENOG502S46Y">
    <property type="taxonomic scope" value="Eukaryota"/>
</dbReference>
<dbReference type="HOGENOM" id="CLU_090059_0_0_1"/>
<dbReference type="InParanoid" id="Q6CQQ8"/>
<dbReference type="OMA" id="FHRWAGK"/>
<dbReference type="Proteomes" id="UP000000598">
    <property type="component" value="Chromosome D"/>
</dbReference>
<dbReference type="GO" id="GO:0005739">
    <property type="term" value="C:mitochondrion"/>
    <property type="evidence" value="ECO:0007669"/>
    <property type="project" value="UniProtKB-SubCell"/>
</dbReference>
<dbReference type="GO" id="GO:0000002">
    <property type="term" value="P:mitochondrial genome maintenance"/>
    <property type="evidence" value="ECO:0007669"/>
    <property type="project" value="InterPro"/>
</dbReference>
<dbReference type="InterPro" id="IPR031415">
    <property type="entry name" value="Rrg8"/>
</dbReference>
<dbReference type="Pfam" id="PF17068">
    <property type="entry name" value="RRG8"/>
    <property type="match status" value="1"/>
</dbReference>
<proteinExistence type="inferred from homology"/>
<feature type="chain" id="PRO_0000405466" description="Required for respiratory growth protein 8, mitochondrial">
    <location>
        <begin position="1"/>
        <end position="282"/>
    </location>
</feature>
<accession>Q6CQQ8</accession>
<reference key="1">
    <citation type="journal article" date="2004" name="Nature">
        <title>Genome evolution in yeasts.</title>
        <authorList>
            <person name="Dujon B."/>
            <person name="Sherman D."/>
            <person name="Fischer G."/>
            <person name="Durrens P."/>
            <person name="Casaregola S."/>
            <person name="Lafontaine I."/>
            <person name="de Montigny J."/>
            <person name="Marck C."/>
            <person name="Neuveglise C."/>
            <person name="Talla E."/>
            <person name="Goffard N."/>
            <person name="Frangeul L."/>
            <person name="Aigle M."/>
            <person name="Anthouard V."/>
            <person name="Babour A."/>
            <person name="Barbe V."/>
            <person name="Barnay S."/>
            <person name="Blanchin S."/>
            <person name="Beckerich J.-M."/>
            <person name="Beyne E."/>
            <person name="Bleykasten C."/>
            <person name="Boisrame A."/>
            <person name="Boyer J."/>
            <person name="Cattolico L."/>
            <person name="Confanioleri F."/>
            <person name="de Daruvar A."/>
            <person name="Despons L."/>
            <person name="Fabre E."/>
            <person name="Fairhead C."/>
            <person name="Ferry-Dumazet H."/>
            <person name="Groppi A."/>
            <person name="Hantraye F."/>
            <person name="Hennequin C."/>
            <person name="Jauniaux N."/>
            <person name="Joyet P."/>
            <person name="Kachouri R."/>
            <person name="Kerrest A."/>
            <person name="Koszul R."/>
            <person name="Lemaire M."/>
            <person name="Lesur I."/>
            <person name="Ma L."/>
            <person name="Muller H."/>
            <person name="Nicaud J.-M."/>
            <person name="Nikolski M."/>
            <person name="Oztas S."/>
            <person name="Ozier-Kalogeropoulos O."/>
            <person name="Pellenz S."/>
            <person name="Potier S."/>
            <person name="Richard G.-F."/>
            <person name="Straub M.-L."/>
            <person name="Suleau A."/>
            <person name="Swennen D."/>
            <person name="Tekaia F."/>
            <person name="Wesolowski-Louvel M."/>
            <person name="Westhof E."/>
            <person name="Wirth B."/>
            <person name="Zeniou-Meyer M."/>
            <person name="Zivanovic Y."/>
            <person name="Bolotin-Fukuhara M."/>
            <person name="Thierry A."/>
            <person name="Bouchier C."/>
            <person name="Caudron B."/>
            <person name="Scarpelli C."/>
            <person name="Gaillardin C."/>
            <person name="Weissenbach J."/>
            <person name="Wincker P."/>
            <person name="Souciet J.-L."/>
        </authorList>
    </citation>
    <scope>NUCLEOTIDE SEQUENCE [LARGE SCALE GENOMIC DNA]</scope>
    <source>
        <strain>ATCC 8585 / CBS 2359 / DSM 70799 / NBRC 1267 / NRRL Y-1140 / WM37</strain>
    </source>
</reference>
<comment type="function">
    <text evidence="1">Required for respiratory activity and maintenance and expression of the mitochondrial genome.</text>
</comment>
<comment type="subcellular location">
    <subcellularLocation>
        <location evidence="1">Mitochondrion</location>
    </subcellularLocation>
</comment>
<comment type="similarity">
    <text evidence="2">Belongs to the RRG8 family.</text>
</comment>
<name>RRG8_KLULA</name>